<gene>
    <name type="primary">relA</name>
</gene>
<protein>
    <recommendedName>
        <fullName>GTP pyrophosphokinase</fullName>
        <ecNumber>2.7.6.5</ecNumber>
    </recommendedName>
    <alternativeName>
        <fullName>(p)ppGpp synthase</fullName>
    </alternativeName>
    <alternativeName>
        <fullName>ATP:GTP 3'-pyrophosphotransferase</fullName>
    </alternativeName>
    <alternativeName>
        <fullName>ppGpp synthase I</fullName>
    </alternativeName>
</protein>
<reference key="1">
    <citation type="journal article" date="1999" name="J. Bacteriol.">
        <title>relA is required for actinomycin production in Streptomyces antibioticus.</title>
        <authorList>
            <person name="Hoyt S."/>
            <person name="Jones G.H."/>
        </authorList>
    </citation>
    <scope>NUCLEOTIDE SEQUENCE [GENOMIC DNA]</scope>
    <source>
        <strain>DSM 41481 / IMRU 3720</strain>
    </source>
</reference>
<keyword id="KW-0045">Antibiotic biosynthesis</keyword>
<keyword id="KW-0067">ATP-binding</keyword>
<keyword id="KW-0342">GTP-binding</keyword>
<keyword id="KW-0418">Kinase</keyword>
<keyword id="KW-0547">Nucleotide-binding</keyword>
<keyword id="KW-0808">Transferase</keyword>
<evidence type="ECO:0000250" key="1"/>
<evidence type="ECO:0000255" key="2">
    <source>
        <dbReference type="PROSITE-ProRule" id="PRU01007"/>
    </source>
</evidence>
<evidence type="ECO:0000255" key="3">
    <source>
        <dbReference type="PROSITE-ProRule" id="PRU01175"/>
    </source>
</evidence>
<evidence type="ECO:0000255" key="4">
    <source>
        <dbReference type="PROSITE-ProRule" id="PRU01228"/>
    </source>
</evidence>
<evidence type="ECO:0000256" key="5">
    <source>
        <dbReference type="SAM" id="MobiDB-lite"/>
    </source>
</evidence>
<evidence type="ECO:0000305" key="6"/>
<dbReference type="EC" id="2.7.6.5"/>
<dbReference type="EMBL" id="AF072829">
    <property type="protein sequence ID" value="AAC26021.1"/>
    <property type="molecule type" value="Genomic_DNA"/>
</dbReference>
<dbReference type="SMR" id="O85709"/>
<dbReference type="STRING" id="1890.AFM16_07730"/>
<dbReference type="UniPathway" id="UPA00908">
    <property type="reaction ID" value="UER00884"/>
</dbReference>
<dbReference type="GO" id="GO:0005886">
    <property type="term" value="C:plasma membrane"/>
    <property type="evidence" value="ECO:0007669"/>
    <property type="project" value="TreeGrafter"/>
</dbReference>
<dbReference type="GO" id="GO:0005524">
    <property type="term" value="F:ATP binding"/>
    <property type="evidence" value="ECO:0007669"/>
    <property type="project" value="UniProtKB-KW"/>
</dbReference>
<dbReference type="GO" id="GO:0005525">
    <property type="term" value="F:GTP binding"/>
    <property type="evidence" value="ECO:0007669"/>
    <property type="project" value="UniProtKB-KW"/>
</dbReference>
<dbReference type="GO" id="GO:0008728">
    <property type="term" value="F:GTP diphosphokinase activity"/>
    <property type="evidence" value="ECO:0007669"/>
    <property type="project" value="UniProtKB-EC"/>
</dbReference>
<dbReference type="GO" id="GO:0016301">
    <property type="term" value="F:kinase activity"/>
    <property type="evidence" value="ECO:0007669"/>
    <property type="project" value="UniProtKB-KW"/>
</dbReference>
<dbReference type="GO" id="GO:0017000">
    <property type="term" value="P:antibiotic biosynthetic process"/>
    <property type="evidence" value="ECO:0007669"/>
    <property type="project" value="UniProtKB-KW"/>
</dbReference>
<dbReference type="GO" id="GO:0015970">
    <property type="term" value="P:guanosine tetraphosphate biosynthetic process"/>
    <property type="evidence" value="ECO:0007669"/>
    <property type="project" value="UniProtKB-UniPathway"/>
</dbReference>
<dbReference type="CDD" id="cd04876">
    <property type="entry name" value="ACT_RelA-SpoT"/>
    <property type="match status" value="1"/>
</dbReference>
<dbReference type="CDD" id="cd00077">
    <property type="entry name" value="HDc"/>
    <property type="match status" value="1"/>
</dbReference>
<dbReference type="CDD" id="cd05399">
    <property type="entry name" value="NT_Rel-Spo_like"/>
    <property type="match status" value="1"/>
</dbReference>
<dbReference type="CDD" id="cd01668">
    <property type="entry name" value="TGS_RSH"/>
    <property type="match status" value="1"/>
</dbReference>
<dbReference type="FunFam" id="3.10.20.30:FF:000002">
    <property type="entry name" value="GTP pyrophosphokinase (RelA/SpoT)"/>
    <property type="match status" value="1"/>
</dbReference>
<dbReference type="FunFam" id="1.10.3210.10:FF:000001">
    <property type="entry name" value="GTP pyrophosphokinase RelA"/>
    <property type="match status" value="1"/>
</dbReference>
<dbReference type="FunFam" id="3.30.460.10:FF:000001">
    <property type="entry name" value="GTP pyrophosphokinase RelA"/>
    <property type="match status" value="1"/>
</dbReference>
<dbReference type="FunFam" id="3.30.70.260:FF:000003">
    <property type="entry name" value="GTP pyrophosphokinase RelA"/>
    <property type="match status" value="1"/>
</dbReference>
<dbReference type="Gene3D" id="3.10.20.30">
    <property type="match status" value="1"/>
</dbReference>
<dbReference type="Gene3D" id="3.30.70.260">
    <property type="match status" value="1"/>
</dbReference>
<dbReference type="Gene3D" id="3.30.460.10">
    <property type="entry name" value="Beta Polymerase, domain 2"/>
    <property type="match status" value="1"/>
</dbReference>
<dbReference type="Gene3D" id="1.10.3210.10">
    <property type="entry name" value="Hypothetical protein af1432"/>
    <property type="match status" value="1"/>
</dbReference>
<dbReference type="InterPro" id="IPR045865">
    <property type="entry name" value="ACT-like_dom_sf"/>
</dbReference>
<dbReference type="InterPro" id="IPR002912">
    <property type="entry name" value="ACT_dom"/>
</dbReference>
<dbReference type="InterPro" id="IPR012675">
    <property type="entry name" value="Beta-grasp_dom_sf"/>
</dbReference>
<dbReference type="InterPro" id="IPR003607">
    <property type="entry name" value="HD/PDEase_dom"/>
</dbReference>
<dbReference type="InterPro" id="IPR006674">
    <property type="entry name" value="HD_domain"/>
</dbReference>
<dbReference type="InterPro" id="IPR043519">
    <property type="entry name" value="NT_sf"/>
</dbReference>
<dbReference type="InterPro" id="IPR004811">
    <property type="entry name" value="RelA/Spo_fam"/>
</dbReference>
<dbReference type="InterPro" id="IPR045600">
    <property type="entry name" value="RelA/SpoT_AH_RIS"/>
</dbReference>
<dbReference type="InterPro" id="IPR007685">
    <property type="entry name" value="RelA_SpoT"/>
</dbReference>
<dbReference type="InterPro" id="IPR004095">
    <property type="entry name" value="TGS"/>
</dbReference>
<dbReference type="InterPro" id="IPR012676">
    <property type="entry name" value="TGS-like"/>
</dbReference>
<dbReference type="InterPro" id="IPR033655">
    <property type="entry name" value="TGS_RelA/SpoT"/>
</dbReference>
<dbReference type="NCBIfam" id="TIGR00691">
    <property type="entry name" value="spoT_relA"/>
    <property type="match status" value="1"/>
</dbReference>
<dbReference type="PANTHER" id="PTHR21262:SF31">
    <property type="entry name" value="GTP PYROPHOSPHOKINASE"/>
    <property type="match status" value="1"/>
</dbReference>
<dbReference type="PANTHER" id="PTHR21262">
    <property type="entry name" value="GUANOSINE-3',5'-BIS DIPHOSPHATE 3'-PYROPHOSPHOHYDROLASE"/>
    <property type="match status" value="1"/>
</dbReference>
<dbReference type="Pfam" id="PF13291">
    <property type="entry name" value="ACT_4"/>
    <property type="match status" value="1"/>
</dbReference>
<dbReference type="Pfam" id="PF13328">
    <property type="entry name" value="HD_4"/>
    <property type="match status" value="1"/>
</dbReference>
<dbReference type="Pfam" id="PF19296">
    <property type="entry name" value="RelA_AH_RIS"/>
    <property type="match status" value="1"/>
</dbReference>
<dbReference type="Pfam" id="PF04607">
    <property type="entry name" value="RelA_SpoT"/>
    <property type="match status" value="1"/>
</dbReference>
<dbReference type="Pfam" id="PF02824">
    <property type="entry name" value="TGS"/>
    <property type="match status" value="1"/>
</dbReference>
<dbReference type="SMART" id="SM00471">
    <property type="entry name" value="HDc"/>
    <property type="match status" value="1"/>
</dbReference>
<dbReference type="SMART" id="SM00954">
    <property type="entry name" value="RelA_SpoT"/>
    <property type="match status" value="1"/>
</dbReference>
<dbReference type="SUPFAM" id="SSF55021">
    <property type="entry name" value="ACT-like"/>
    <property type="match status" value="1"/>
</dbReference>
<dbReference type="SUPFAM" id="SSF109604">
    <property type="entry name" value="HD-domain/PDEase-like"/>
    <property type="match status" value="1"/>
</dbReference>
<dbReference type="SUPFAM" id="SSF81301">
    <property type="entry name" value="Nucleotidyltransferase"/>
    <property type="match status" value="1"/>
</dbReference>
<dbReference type="SUPFAM" id="SSF81271">
    <property type="entry name" value="TGS-like"/>
    <property type="match status" value="1"/>
</dbReference>
<dbReference type="PROSITE" id="PS51671">
    <property type="entry name" value="ACT"/>
    <property type="match status" value="1"/>
</dbReference>
<dbReference type="PROSITE" id="PS51831">
    <property type="entry name" value="HD"/>
    <property type="match status" value="1"/>
</dbReference>
<dbReference type="PROSITE" id="PS51880">
    <property type="entry name" value="TGS"/>
    <property type="match status" value="1"/>
</dbReference>
<comment type="function">
    <text evidence="1">In eubacteria ppGpp (guanosine 3'-diphosphate 5'-diphosphate) is a mediator of the stringent response that coordinates a variety of cellular activities in response to changes in nutritional abundance. This enzyme catalyzes the formation of pppGpp which is then hydrolyzed to form ppGpp (By similarity). Is required for actinomycin production.</text>
</comment>
<comment type="catalytic activity">
    <reaction>
        <text>GTP + ATP = guanosine 3'-diphosphate 5'-triphosphate + AMP</text>
        <dbReference type="Rhea" id="RHEA:22088"/>
        <dbReference type="ChEBI" id="CHEBI:30616"/>
        <dbReference type="ChEBI" id="CHEBI:37565"/>
        <dbReference type="ChEBI" id="CHEBI:142410"/>
        <dbReference type="ChEBI" id="CHEBI:456215"/>
        <dbReference type="EC" id="2.7.6.5"/>
    </reaction>
</comment>
<comment type="pathway">
    <text>Purine metabolism; ppGpp biosynthesis; ppGpp from GTP: step 1/2.</text>
</comment>
<comment type="similarity">
    <text evidence="6">Belongs to the RelA/SpoT family.</text>
</comment>
<name>RELA_STRAT</name>
<sequence>MPDEAQHLTAAKPDSAAGAAAEPAAHAQDGGGPVEHDRSAPADKPAERTRPKPAPPERPRPPPPRARAAGQPAARSGGSSNRVRARLARLGVQRANLTHPVLEPLLRIVRANDPKIETSTLRQIEKAYQVAERWHRGQKRKSGDPYITHPLAVTTILAELGMDPATLMAGLLHDSREDTEYGLDDLRRDFGDVVGLLVDGVTKLDKVKFGEAAQAETVRKMVVAMAKDPRVLVIKLADRLHNMRTMRYLKREKQEKKARETLEIYAPLAHRLGMNTIKWELEDLAFAILYPKMYDEIVRLVAERAPKRDEYLAIVTDEVQSDLRARRIKATVTGRPKHYYSVYQKIIVRGRDFAEIYDLVGIRVLVDTVRDCYAALGTVHARWNPVPGRFKDYIAMPKFNMYQSLHTTVIGPNGKPVELQIRTFDMHRRAEYGIAAHWKYKQEAVARASKVRTDVPKPAKGKDDHLNDMAWLRQLLDWQKETEDPGEFLESLRFDLSRNEVFVFTPKSDVIALPAGATPVDFAYAVHTEVGHRTIGARVNGRLVPLESTLDNGDLVEVFTSKAAGAGPSRDWLGFVKSPRARNKIRAWFSKERRDEAIEQGKDAIARAMRKQNLPIQRILTGDSLVTLAHEMRYPDISSSDAAIGEGHVGAQNVVQKLVQALGGEEAASEEIDEAVPSRSRSRKRRSNQDPGVVVKGVDDVWVKLARCCTPVPGEPIIGFVTRGSAVSVHRSDCVNVESLAREPERILEVEWAPTQSSVFLVAIQVEALDRSRLLSDVTRVLSDQHVNILSAAVQTSRDRVATSRFTFEMGDPKHLGHVLKAVRGVEGVYDVYRVTPGPQP</sequence>
<proteinExistence type="inferred from homology"/>
<organism>
    <name type="scientific">Streptomyces antibioticus</name>
    <dbReference type="NCBI Taxonomy" id="1890"/>
    <lineage>
        <taxon>Bacteria</taxon>
        <taxon>Bacillati</taxon>
        <taxon>Actinomycetota</taxon>
        <taxon>Actinomycetes</taxon>
        <taxon>Kitasatosporales</taxon>
        <taxon>Streptomycetaceae</taxon>
        <taxon>Streptomyces</taxon>
    </lineage>
</organism>
<accession>O85709</accession>
<feature type="chain" id="PRO_0000166563" description="GTP pyrophosphokinase">
    <location>
        <begin position="1"/>
        <end position="841"/>
    </location>
</feature>
<feature type="domain" description="HD" evidence="3">
    <location>
        <begin position="146"/>
        <end position="243"/>
    </location>
</feature>
<feature type="domain" description="TGS" evidence="4">
    <location>
        <begin position="499"/>
        <end position="560"/>
    </location>
</feature>
<feature type="domain" description="ACT" evidence="2">
    <location>
        <begin position="763"/>
        <end position="837"/>
    </location>
</feature>
<feature type="region of interest" description="Disordered" evidence="5">
    <location>
        <begin position="1"/>
        <end position="82"/>
    </location>
</feature>
<feature type="region of interest" description="Disordered" evidence="5">
    <location>
        <begin position="669"/>
        <end position="691"/>
    </location>
</feature>
<feature type="compositionally biased region" description="Low complexity" evidence="5">
    <location>
        <begin position="10"/>
        <end position="27"/>
    </location>
</feature>
<feature type="compositionally biased region" description="Basic and acidic residues" evidence="5">
    <location>
        <begin position="34"/>
        <end position="60"/>
    </location>
</feature>
<feature type="compositionally biased region" description="Low complexity" evidence="5">
    <location>
        <begin position="66"/>
        <end position="75"/>
    </location>
</feature>